<keyword id="KW-0030">Aminoacyl-tRNA synthetase</keyword>
<keyword id="KW-0067">ATP-binding</keyword>
<keyword id="KW-0963">Cytoplasm</keyword>
<keyword id="KW-0436">Ligase</keyword>
<keyword id="KW-0547">Nucleotide-binding</keyword>
<keyword id="KW-0648">Protein biosynthesis</keyword>
<keyword id="KW-1185">Reference proteome</keyword>
<accession>Q8ZQX5</accession>
<organism>
    <name type="scientific">Salmonella typhimurium (strain LT2 / SGSC1412 / ATCC 700720)</name>
    <dbReference type="NCBI Taxonomy" id="99287"/>
    <lineage>
        <taxon>Bacteria</taxon>
        <taxon>Pseudomonadati</taxon>
        <taxon>Pseudomonadota</taxon>
        <taxon>Gammaproteobacteria</taxon>
        <taxon>Enterobacterales</taxon>
        <taxon>Enterobacteriaceae</taxon>
        <taxon>Salmonella</taxon>
    </lineage>
</organism>
<reference key="1">
    <citation type="journal article" date="2001" name="Nature">
        <title>Complete genome sequence of Salmonella enterica serovar Typhimurium LT2.</title>
        <authorList>
            <person name="McClelland M."/>
            <person name="Sanderson K.E."/>
            <person name="Spieth J."/>
            <person name="Clifton S.W."/>
            <person name="Latreille P."/>
            <person name="Courtney L."/>
            <person name="Porwollik S."/>
            <person name="Ali J."/>
            <person name="Dante M."/>
            <person name="Du F."/>
            <person name="Hou S."/>
            <person name="Layman D."/>
            <person name="Leonard S."/>
            <person name="Nguyen C."/>
            <person name="Scott K."/>
            <person name="Holmes A."/>
            <person name="Grewal N."/>
            <person name="Mulvaney E."/>
            <person name="Ryan E."/>
            <person name="Sun H."/>
            <person name="Florea L."/>
            <person name="Miller W."/>
            <person name="Stoneking T."/>
            <person name="Nhan M."/>
            <person name="Waterston R."/>
            <person name="Wilson R.K."/>
        </authorList>
    </citation>
    <scope>NUCLEOTIDE SEQUENCE [LARGE SCALE GENOMIC DNA]</scope>
    <source>
        <strain>LT2 / SGSC1412 / ATCC 700720</strain>
    </source>
</reference>
<dbReference type="EC" id="6.1.1.18" evidence="2"/>
<dbReference type="EMBL" id="AE006468">
    <property type="protein sequence ID" value="AAL19630.1"/>
    <property type="molecule type" value="Genomic_DNA"/>
</dbReference>
<dbReference type="RefSeq" id="NP_459671.1">
    <property type="nucleotide sequence ID" value="NC_003197.2"/>
</dbReference>
<dbReference type="RefSeq" id="WP_001287181.1">
    <property type="nucleotide sequence ID" value="NC_003197.2"/>
</dbReference>
<dbReference type="SMR" id="Q8ZQX5"/>
<dbReference type="STRING" id="99287.STM0686"/>
<dbReference type="PaxDb" id="99287-STM0686"/>
<dbReference type="GeneID" id="1252206"/>
<dbReference type="KEGG" id="stm:STM0686"/>
<dbReference type="PATRIC" id="fig|99287.12.peg.716"/>
<dbReference type="HOGENOM" id="CLU_001882_2_3_6"/>
<dbReference type="OMA" id="TWCIYPM"/>
<dbReference type="PhylomeDB" id="Q8ZQX5"/>
<dbReference type="BioCyc" id="SENT99287:STM0686-MONOMER"/>
<dbReference type="Proteomes" id="UP000001014">
    <property type="component" value="Chromosome"/>
</dbReference>
<dbReference type="GO" id="GO:0005829">
    <property type="term" value="C:cytosol"/>
    <property type="evidence" value="ECO:0000318"/>
    <property type="project" value="GO_Central"/>
</dbReference>
<dbReference type="GO" id="GO:0005524">
    <property type="term" value="F:ATP binding"/>
    <property type="evidence" value="ECO:0007669"/>
    <property type="project" value="UniProtKB-UniRule"/>
</dbReference>
<dbReference type="GO" id="GO:0004819">
    <property type="term" value="F:glutamine-tRNA ligase activity"/>
    <property type="evidence" value="ECO:0000318"/>
    <property type="project" value="GO_Central"/>
</dbReference>
<dbReference type="GO" id="GO:0006425">
    <property type="term" value="P:glutaminyl-tRNA aminoacylation"/>
    <property type="evidence" value="ECO:0000318"/>
    <property type="project" value="GO_Central"/>
</dbReference>
<dbReference type="GO" id="GO:0006424">
    <property type="term" value="P:glutamyl-tRNA aminoacylation"/>
    <property type="evidence" value="ECO:0007669"/>
    <property type="project" value="UniProtKB-UniRule"/>
</dbReference>
<dbReference type="CDD" id="cd00807">
    <property type="entry name" value="GlnRS_core"/>
    <property type="match status" value="1"/>
</dbReference>
<dbReference type="FunFam" id="1.10.1160.10:FF:000001">
    <property type="entry name" value="Glutamine--tRNA ligase"/>
    <property type="match status" value="1"/>
</dbReference>
<dbReference type="FunFam" id="2.40.240.10:FF:000001">
    <property type="entry name" value="Glutamine--tRNA ligase"/>
    <property type="match status" value="1"/>
</dbReference>
<dbReference type="FunFam" id="2.40.240.10:FF:000003">
    <property type="entry name" value="Glutamine--tRNA ligase"/>
    <property type="match status" value="1"/>
</dbReference>
<dbReference type="FunFam" id="3.90.800.10:FF:000001">
    <property type="entry name" value="Glutamine--tRNA ligase"/>
    <property type="match status" value="1"/>
</dbReference>
<dbReference type="FunFam" id="3.40.50.620:FF:000037">
    <property type="entry name" value="Glutamine--tRNA ligase cytoplasmic"/>
    <property type="match status" value="1"/>
</dbReference>
<dbReference type="Gene3D" id="1.10.1160.10">
    <property type="entry name" value="Glutamyl-trna Synthetase, Domain 2"/>
    <property type="match status" value="1"/>
</dbReference>
<dbReference type="Gene3D" id="3.90.800.10">
    <property type="entry name" value="Glutamyl-tRNA Synthetase, Domain 3"/>
    <property type="match status" value="1"/>
</dbReference>
<dbReference type="Gene3D" id="3.40.50.620">
    <property type="entry name" value="HUPs"/>
    <property type="match status" value="1"/>
</dbReference>
<dbReference type="Gene3D" id="2.40.240.10">
    <property type="entry name" value="Ribosomal Protein L25, Chain P"/>
    <property type="match status" value="2"/>
</dbReference>
<dbReference type="HAMAP" id="MF_00126">
    <property type="entry name" value="Gln_tRNA_synth"/>
    <property type="match status" value="1"/>
</dbReference>
<dbReference type="InterPro" id="IPR001412">
    <property type="entry name" value="aa-tRNA-synth_I_CS"/>
</dbReference>
<dbReference type="InterPro" id="IPR004514">
    <property type="entry name" value="Gln-tRNA-synth"/>
</dbReference>
<dbReference type="InterPro" id="IPR050132">
    <property type="entry name" value="Gln/Glu-tRNA_Ligase"/>
</dbReference>
<dbReference type="InterPro" id="IPR022861">
    <property type="entry name" value="Gln_tRNA_ligase_bac"/>
</dbReference>
<dbReference type="InterPro" id="IPR000924">
    <property type="entry name" value="Glu/Gln-tRNA-synth"/>
</dbReference>
<dbReference type="InterPro" id="IPR020058">
    <property type="entry name" value="Glu/Gln-tRNA-synth_Ib_cat-dom"/>
</dbReference>
<dbReference type="InterPro" id="IPR020059">
    <property type="entry name" value="Glu/Gln-tRNA-synth_Ib_codon-bd"/>
</dbReference>
<dbReference type="InterPro" id="IPR020061">
    <property type="entry name" value="Glu_tRNA_lig_a-bdl"/>
</dbReference>
<dbReference type="InterPro" id="IPR020056">
    <property type="entry name" value="Rbsml_bL25/Gln-tRNA_synth_N"/>
</dbReference>
<dbReference type="InterPro" id="IPR011035">
    <property type="entry name" value="Ribosomal_bL25/Gln-tRNA_synth"/>
</dbReference>
<dbReference type="InterPro" id="IPR014729">
    <property type="entry name" value="Rossmann-like_a/b/a_fold"/>
</dbReference>
<dbReference type="InterPro" id="IPR049437">
    <property type="entry name" value="tRNA-synt_1c_C2"/>
</dbReference>
<dbReference type="NCBIfam" id="TIGR00440">
    <property type="entry name" value="glnS"/>
    <property type="match status" value="1"/>
</dbReference>
<dbReference type="NCBIfam" id="NF011291">
    <property type="entry name" value="PRK14703.1"/>
    <property type="match status" value="1"/>
</dbReference>
<dbReference type="PANTHER" id="PTHR43097:SF5">
    <property type="entry name" value="GLUTAMATE--TRNA LIGASE"/>
    <property type="match status" value="1"/>
</dbReference>
<dbReference type="PANTHER" id="PTHR43097">
    <property type="entry name" value="GLUTAMINE-TRNA LIGASE"/>
    <property type="match status" value="1"/>
</dbReference>
<dbReference type="Pfam" id="PF00749">
    <property type="entry name" value="tRNA-synt_1c"/>
    <property type="match status" value="1"/>
</dbReference>
<dbReference type="Pfam" id="PF03950">
    <property type="entry name" value="tRNA-synt_1c_C"/>
    <property type="match status" value="1"/>
</dbReference>
<dbReference type="Pfam" id="PF20974">
    <property type="entry name" value="tRNA-synt_1c_C2"/>
    <property type="match status" value="1"/>
</dbReference>
<dbReference type="PRINTS" id="PR00987">
    <property type="entry name" value="TRNASYNTHGLU"/>
</dbReference>
<dbReference type="SUPFAM" id="SSF52374">
    <property type="entry name" value="Nucleotidylyl transferase"/>
    <property type="match status" value="1"/>
</dbReference>
<dbReference type="SUPFAM" id="SSF50715">
    <property type="entry name" value="Ribosomal protein L25-like"/>
    <property type="match status" value="1"/>
</dbReference>
<dbReference type="PROSITE" id="PS00178">
    <property type="entry name" value="AA_TRNA_LIGASE_I"/>
    <property type="match status" value="1"/>
</dbReference>
<comment type="catalytic activity">
    <reaction evidence="2">
        <text>tRNA(Gln) + L-glutamine + ATP = L-glutaminyl-tRNA(Gln) + AMP + diphosphate</text>
        <dbReference type="Rhea" id="RHEA:20121"/>
        <dbReference type="Rhea" id="RHEA-COMP:9662"/>
        <dbReference type="Rhea" id="RHEA-COMP:9681"/>
        <dbReference type="ChEBI" id="CHEBI:30616"/>
        <dbReference type="ChEBI" id="CHEBI:33019"/>
        <dbReference type="ChEBI" id="CHEBI:58359"/>
        <dbReference type="ChEBI" id="CHEBI:78442"/>
        <dbReference type="ChEBI" id="CHEBI:78521"/>
        <dbReference type="ChEBI" id="CHEBI:456215"/>
        <dbReference type="EC" id="6.1.1.18"/>
    </reaction>
</comment>
<comment type="subunit">
    <text evidence="2">Monomer.</text>
</comment>
<comment type="subcellular location">
    <subcellularLocation>
        <location evidence="2">Cytoplasm</location>
    </subcellularLocation>
</comment>
<comment type="similarity">
    <text evidence="2 3">Belongs to the class-I aminoacyl-tRNA synthetase family.</text>
</comment>
<sequence length="555" mass="63538">MSEAEARPTNFIRQIIDEDLASGKHTTVHTRFPPEPNGYLHIGHAKSICLNFGIAQDYQGQCNLRFDDTNPVKEDIEYVDSIKNDVEWLGFHWSGDIRYSSDYFDQLHAYAVELINKGLAYVDELTPEQIREYRGTLTAPGKNSPFRDRSVEENLALFEKMRTGGFEEGKACLRAKIDMASPFIVMRDPVLYRIKFAEHHQTGNKWCIYPMYDFTHCISDALEGITHSLCTLEFQDNRRLYDWVLDNITIPVHPRQYEFSRLNLEYTVMSKRKLNLLVTDKHVEGWDDPRMPTISGLRRRGYTAASIREFCKRIGVTKQDNTIEMASLESCIREDLNENAPRAMAVIDPVKLVIENYPQGESEMVTMPNHPNKPEMGSREVPFSGEIWIDRADFREEANKQYKRLVMGKEVRLRNAYVIKAERVEKDAEGNITTIFCTYDADTLSKDPADGRKVKGVIHWVSAAHALPIEIRLYDRLFSVPNPGAAEDFLSVINPESLVIKQGYGEPSLKAAVAGKAFQFEREGYFCLDSRYATADKLVFNRTVGLRDTWAKAGE</sequence>
<proteinExistence type="inferred from homology"/>
<feature type="initiator methionine" description="Removed" evidence="1">
    <location>
        <position position="1"/>
    </location>
</feature>
<feature type="chain" id="PRO_0000195849" description="Glutamine--tRNA ligase">
    <location>
        <begin position="2"/>
        <end position="555"/>
    </location>
</feature>
<feature type="region of interest" description="Interaction with tRNA" evidence="2">
    <location>
        <begin position="317"/>
        <end position="324"/>
    </location>
</feature>
<feature type="short sequence motif" description="'HIGH' region" evidence="2">
    <location>
        <begin position="34"/>
        <end position="44"/>
    </location>
</feature>
<feature type="short sequence motif" description="'KMSKS' region" evidence="2">
    <location>
        <begin position="268"/>
        <end position="272"/>
    </location>
</feature>
<feature type="binding site" evidence="2">
    <location>
        <begin position="35"/>
        <end position="37"/>
    </location>
    <ligand>
        <name>ATP</name>
        <dbReference type="ChEBI" id="CHEBI:30616"/>
    </ligand>
</feature>
<feature type="binding site" evidence="2">
    <location>
        <begin position="41"/>
        <end position="47"/>
    </location>
    <ligand>
        <name>ATP</name>
        <dbReference type="ChEBI" id="CHEBI:30616"/>
    </ligand>
</feature>
<feature type="binding site" evidence="2">
    <location>
        <position position="67"/>
    </location>
    <ligand>
        <name>L-glutamine</name>
        <dbReference type="ChEBI" id="CHEBI:58359"/>
    </ligand>
</feature>
<feature type="binding site" evidence="2">
    <location>
        <position position="212"/>
    </location>
    <ligand>
        <name>L-glutamine</name>
        <dbReference type="ChEBI" id="CHEBI:58359"/>
    </ligand>
</feature>
<feature type="binding site" evidence="2">
    <location>
        <position position="231"/>
    </location>
    <ligand>
        <name>ATP</name>
        <dbReference type="ChEBI" id="CHEBI:30616"/>
    </ligand>
</feature>
<feature type="binding site" evidence="2">
    <location>
        <begin position="261"/>
        <end position="262"/>
    </location>
    <ligand>
        <name>ATP</name>
        <dbReference type="ChEBI" id="CHEBI:30616"/>
    </ligand>
</feature>
<feature type="binding site" evidence="2">
    <location>
        <begin position="269"/>
        <end position="271"/>
    </location>
    <ligand>
        <name>ATP</name>
        <dbReference type="ChEBI" id="CHEBI:30616"/>
    </ligand>
</feature>
<name>SYQ_SALTY</name>
<gene>
    <name evidence="2" type="primary">glnS</name>
    <name type="ordered locus">STM0686</name>
</gene>
<protein>
    <recommendedName>
        <fullName evidence="2">Glutamine--tRNA ligase</fullName>
        <ecNumber evidence="2">6.1.1.18</ecNumber>
    </recommendedName>
    <alternativeName>
        <fullName evidence="2">Glutaminyl-tRNA synthetase</fullName>
        <shortName evidence="2">GlnRS</shortName>
    </alternativeName>
</protein>
<evidence type="ECO:0000250" key="1"/>
<evidence type="ECO:0000255" key="2">
    <source>
        <dbReference type="HAMAP-Rule" id="MF_00126"/>
    </source>
</evidence>
<evidence type="ECO:0000305" key="3"/>